<name>Y1454_ACIB5</name>
<sequence>MYKDIKVDPAQLEAALDARLKIRAGFDKPTAGMAAGMTQVNMISVPRDWAYDFLLYAHRNPQSCPVLDVLEEGIYATKLAADSDIRTDFPRYRIWKDGEMVDEVTDAREIYNAHPDLVTFLIGCSFSFETALQEAGIEVRHIHDDTNVPMYLSNIKCEPAGRISGNMVVSMRPIPSHQISEAVKITARMPSVHGAPVHIGHPESLGIKDVNKPDFGDASRIEAGEIPVFWACGVTPQAAVMNSKIPFAISHAPGYMFITDIPDRAWMG</sequence>
<feature type="chain" id="PRO_0000379808" description="Putative hydro-lyase AB57_1454">
    <location>
        <begin position="1"/>
        <end position="268"/>
    </location>
</feature>
<comment type="similarity">
    <text evidence="1">Belongs to the D-glutamate cyclase family.</text>
</comment>
<protein>
    <recommendedName>
        <fullName evidence="1">Putative hydro-lyase AB57_1454</fullName>
        <ecNumber evidence="1">4.2.1.-</ecNumber>
    </recommendedName>
</protein>
<dbReference type="EC" id="4.2.1.-" evidence="1"/>
<dbReference type="EMBL" id="CP001182">
    <property type="protein sequence ID" value="ACJ40472.1"/>
    <property type="molecule type" value="Genomic_DNA"/>
</dbReference>
<dbReference type="RefSeq" id="WP_000276200.1">
    <property type="nucleotide sequence ID" value="NC_011586.2"/>
</dbReference>
<dbReference type="SMR" id="B7IBY9"/>
<dbReference type="KEGG" id="abn:AB57_1454"/>
<dbReference type="HOGENOM" id="CLU_059759_0_0_6"/>
<dbReference type="Proteomes" id="UP000007094">
    <property type="component" value="Chromosome"/>
</dbReference>
<dbReference type="GO" id="GO:0016829">
    <property type="term" value="F:lyase activity"/>
    <property type="evidence" value="ECO:0007669"/>
    <property type="project" value="UniProtKB-KW"/>
</dbReference>
<dbReference type="FunFam" id="3.30.2040.10:FF:000001">
    <property type="entry name" value="D-glutamate cyclase, mitochondrial"/>
    <property type="match status" value="1"/>
</dbReference>
<dbReference type="Gene3D" id="3.40.1640.10">
    <property type="entry name" value="PSTPO5379-like"/>
    <property type="match status" value="1"/>
</dbReference>
<dbReference type="Gene3D" id="3.30.2040.10">
    <property type="entry name" value="PSTPO5379-like domain"/>
    <property type="match status" value="1"/>
</dbReference>
<dbReference type="HAMAP" id="MF_01830">
    <property type="entry name" value="Hydro_lyase"/>
    <property type="match status" value="1"/>
</dbReference>
<dbReference type="InterPro" id="IPR009906">
    <property type="entry name" value="D-Glu_cyclase"/>
</dbReference>
<dbReference type="InterPro" id="IPR038021">
    <property type="entry name" value="Putative_hydro-lyase"/>
</dbReference>
<dbReference type="InterPro" id="IPR016938">
    <property type="entry name" value="UPF0317"/>
</dbReference>
<dbReference type="NCBIfam" id="NF003969">
    <property type="entry name" value="PRK05463.1"/>
    <property type="match status" value="1"/>
</dbReference>
<dbReference type="PANTHER" id="PTHR32022">
    <property type="entry name" value="D-GLUTAMATE CYCLASE, MITOCHONDRIAL"/>
    <property type="match status" value="1"/>
</dbReference>
<dbReference type="PANTHER" id="PTHR32022:SF10">
    <property type="entry name" value="D-GLUTAMATE CYCLASE, MITOCHONDRIAL"/>
    <property type="match status" value="1"/>
</dbReference>
<dbReference type="Pfam" id="PF07286">
    <property type="entry name" value="D-Glu_cyclase"/>
    <property type="match status" value="1"/>
</dbReference>
<dbReference type="PIRSF" id="PIRSF029755">
    <property type="entry name" value="UCP029755"/>
    <property type="match status" value="1"/>
</dbReference>
<dbReference type="SUPFAM" id="SSF160920">
    <property type="entry name" value="PSTPO5379-like"/>
    <property type="match status" value="1"/>
</dbReference>
<keyword id="KW-0456">Lyase</keyword>
<evidence type="ECO:0000255" key="1">
    <source>
        <dbReference type="HAMAP-Rule" id="MF_01830"/>
    </source>
</evidence>
<accession>B7IBY9</accession>
<reference key="1">
    <citation type="journal article" date="2008" name="J. Bacteriol.">
        <title>Comparative genome sequence analysis of multidrug-resistant Acinetobacter baumannii.</title>
        <authorList>
            <person name="Adams M.D."/>
            <person name="Goglin K."/>
            <person name="Molyneaux N."/>
            <person name="Hujer K.M."/>
            <person name="Lavender H."/>
            <person name="Jamison J.J."/>
            <person name="MacDonald I.J."/>
            <person name="Martin K.M."/>
            <person name="Russo T."/>
            <person name="Campagnari A.A."/>
            <person name="Hujer A.M."/>
            <person name="Bonomo R.A."/>
            <person name="Gill S.R."/>
        </authorList>
    </citation>
    <scope>NUCLEOTIDE SEQUENCE [LARGE SCALE GENOMIC DNA]</scope>
    <source>
        <strain>AB0057</strain>
    </source>
</reference>
<proteinExistence type="inferred from homology"/>
<gene>
    <name type="ordered locus">AB57_1454</name>
</gene>
<organism>
    <name type="scientific">Acinetobacter baumannii (strain AB0057)</name>
    <dbReference type="NCBI Taxonomy" id="480119"/>
    <lineage>
        <taxon>Bacteria</taxon>
        <taxon>Pseudomonadati</taxon>
        <taxon>Pseudomonadota</taxon>
        <taxon>Gammaproteobacteria</taxon>
        <taxon>Moraxellales</taxon>
        <taxon>Moraxellaceae</taxon>
        <taxon>Acinetobacter</taxon>
        <taxon>Acinetobacter calcoaceticus/baumannii complex</taxon>
    </lineage>
</organism>